<reference key="1">
    <citation type="journal article" date="2005" name="Nature">
        <title>The map-based sequence of the rice genome.</title>
        <authorList>
            <consortium name="International rice genome sequencing project (IRGSP)"/>
        </authorList>
    </citation>
    <scope>NUCLEOTIDE SEQUENCE [LARGE SCALE GENOMIC DNA]</scope>
    <source>
        <strain>cv. Nipponbare</strain>
    </source>
</reference>
<reference key="2">
    <citation type="journal article" date="2008" name="Nucleic Acids Res.">
        <title>The rice annotation project database (RAP-DB): 2008 update.</title>
        <authorList>
            <consortium name="The rice annotation project (RAP)"/>
        </authorList>
    </citation>
    <scope>GENOME REANNOTATION</scope>
    <source>
        <strain>cv. Nipponbare</strain>
    </source>
</reference>
<reference key="3">
    <citation type="journal article" date="2013" name="Rice">
        <title>Improvement of the Oryza sativa Nipponbare reference genome using next generation sequence and optical map data.</title>
        <authorList>
            <person name="Kawahara Y."/>
            <person name="de la Bastide M."/>
            <person name="Hamilton J.P."/>
            <person name="Kanamori H."/>
            <person name="McCombie W.R."/>
            <person name="Ouyang S."/>
            <person name="Schwartz D.C."/>
            <person name="Tanaka T."/>
            <person name="Wu J."/>
            <person name="Zhou S."/>
            <person name="Childs K.L."/>
            <person name="Davidson R.M."/>
            <person name="Lin H."/>
            <person name="Quesada-Ocampo L."/>
            <person name="Vaillancourt B."/>
            <person name="Sakai H."/>
            <person name="Lee S.S."/>
            <person name="Kim J."/>
            <person name="Numa H."/>
            <person name="Itoh T."/>
            <person name="Buell C.R."/>
            <person name="Matsumoto T."/>
        </authorList>
    </citation>
    <scope>GENOME REANNOTATION</scope>
    <source>
        <strain>cv. Nipponbare</strain>
    </source>
</reference>
<reference key="4">
    <citation type="journal article" date="2003" name="Science">
        <title>Collection, mapping, and annotation of over 28,000 cDNA clones from japonica rice.</title>
        <authorList>
            <consortium name="The rice full-length cDNA consortium"/>
        </authorList>
    </citation>
    <scope>NUCLEOTIDE SEQUENCE [LARGE SCALE MRNA]</scope>
    <source>
        <strain>cv. Nipponbare</strain>
    </source>
</reference>
<reference key="5">
    <citation type="journal article" date="2010" name="Plant Sci.">
        <title>Identification and expression analysis of PIN genes in rice.</title>
        <authorList>
            <person name="Miyashita Y."/>
            <person name="Takasugi T."/>
            <person name="Ito Y."/>
        </authorList>
    </citation>
    <scope>IDENTIFICATION</scope>
    <scope>TISSUE SPECIFICITY</scope>
</reference>
<reference key="6">
    <citation type="journal article" date="2005" name="Plant Cell Physiol.">
        <title>A PIN1 family gene, OsPIN1, involved in auxin-dependent adventitious root emergence and tillering in rice.</title>
        <authorList>
            <person name="Xu M."/>
            <person name="Zhu L."/>
            <person name="Shou H."/>
            <person name="Wu P."/>
        </authorList>
    </citation>
    <scope>NOMENCLATURE</scope>
</reference>
<reference key="7">
    <citation type="journal article" date="2009" name="Mol. Plant">
        <title>Expression of PIN genes in rice (Oryza sativa L.): tissue specificity and regulation by hormones.</title>
        <authorList>
            <person name="Wang J.R."/>
            <person name="Hu H."/>
            <person name="Wang G.H."/>
            <person name="Li J."/>
            <person name="Chen J.Y."/>
            <person name="Wu P."/>
        </authorList>
    </citation>
    <scope>TISSUE SPECIFICITY</scope>
</reference>
<organism>
    <name type="scientific">Oryza sativa subsp. japonica</name>
    <name type="common">Rice</name>
    <dbReference type="NCBI Taxonomy" id="39947"/>
    <lineage>
        <taxon>Eukaryota</taxon>
        <taxon>Viridiplantae</taxon>
        <taxon>Streptophyta</taxon>
        <taxon>Embryophyta</taxon>
        <taxon>Tracheophyta</taxon>
        <taxon>Spermatophyta</taxon>
        <taxon>Magnoliopsida</taxon>
        <taxon>Liliopsida</taxon>
        <taxon>Poales</taxon>
        <taxon>Poaceae</taxon>
        <taxon>BOP clade</taxon>
        <taxon>Oryzoideae</taxon>
        <taxon>Oryzeae</taxon>
        <taxon>Oryzinae</taxon>
        <taxon>Oryza</taxon>
        <taxon>Oryza sativa</taxon>
    </lineage>
</organism>
<feature type="chain" id="PRO_0000123790" description="Probable auxin efflux carrier component 1c">
    <location>
        <begin position="1"/>
        <end position="592"/>
    </location>
</feature>
<feature type="topological domain" description="Extracellular" evidence="9">
    <location>
        <begin position="1"/>
        <end position="6"/>
    </location>
</feature>
<feature type="transmembrane region" description="Helical; Name=1" evidence="3">
    <location>
        <begin position="7"/>
        <end position="27"/>
    </location>
</feature>
<feature type="topological domain" description="Cytoplasmic" evidence="9">
    <location>
        <begin position="28"/>
        <end position="38"/>
    </location>
</feature>
<feature type="transmembrane region" description="Helical; Name=2" evidence="3">
    <location>
        <begin position="39"/>
        <end position="59"/>
    </location>
</feature>
<feature type="topological domain" description="Extracellular" evidence="9">
    <location>
        <begin position="60"/>
        <end position="70"/>
    </location>
</feature>
<feature type="transmembrane region" description="Helical; Name=3" evidence="3">
    <location>
        <begin position="71"/>
        <end position="91"/>
    </location>
</feature>
<feature type="topological domain" description="Cytoplasmic" evidence="9">
    <location>
        <begin position="92"/>
        <end position="100"/>
    </location>
</feature>
<feature type="transmembrane region" description="Helical; Name=4" evidence="3">
    <location>
        <begin position="101"/>
        <end position="121"/>
    </location>
</feature>
<feature type="topological domain" description="Extracellular" evidence="9">
    <location>
        <begin position="122"/>
        <end position="131"/>
    </location>
</feature>
<feature type="transmembrane region" description="Helical; Name=5" evidence="3">
    <location>
        <begin position="132"/>
        <end position="152"/>
    </location>
</feature>
<feature type="topological domain" description="Cytoplasmic" evidence="9">
    <location>
        <begin position="153"/>
        <end position="452"/>
    </location>
</feature>
<feature type="transmembrane region" description="Helical; Name=6" evidence="3">
    <location>
        <begin position="453"/>
        <end position="473"/>
    </location>
</feature>
<feature type="topological domain" description="Extracellular" evidence="9">
    <location>
        <begin position="474"/>
        <end position="476"/>
    </location>
</feature>
<feature type="transmembrane region" description="Helical; Name=7" evidence="3">
    <location>
        <begin position="477"/>
        <end position="497"/>
    </location>
</feature>
<feature type="topological domain" description="Cytoplasmic" evidence="9">
    <location>
        <begin position="498"/>
        <end position="511"/>
    </location>
</feature>
<feature type="transmembrane region" description="Helical; Name=8" evidence="3">
    <location>
        <begin position="512"/>
        <end position="532"/>
    </location>
</feature>
<feature type="topological domain" description="Extracellular" evidence="9">
    <location>
        <begin position="533"/>
        <end position="537"/>
    </location>
</feature>
<feature type="transmembrane region" description="Helical; Name=9" evidence="3">
    <location>
        <begin position="538"/>
        <end position="558"/>
    </location>
</feature>
<feature type="topological domain" description="Cytoplasmic" evidence="9">
    <location>
        <begin position="559"/>
        <end position="571"/>
    </location>
</feature>
<feature type="transmembrane region" description="Helical; Name=10" evidence="3">
    <location>
        <begin position="572"/>
        <end position="592"/>
    </location>
</feature>
<feature type="region of interest" description="Disordered" evidence="4">
    <location>
        <begin position="214"/>
        <end position="236"/>
    </location>
</feature>
<feature type="region of interest" description="Disordered" evidence="4">
    <location>
        <begin position="282"/>
        <end position="331"/>
    </location>
</feature>
<feature type="compositionally biased region" description="Polar residues" evidence="4">
    <location>
        <begin position="224"/>
        <end position="236"/>
    </location>
</feature>
<feature type="compositionally biased region" description="Pro residues" evidence="4">
    <location>
        <begin position="309"/>
        <end position="318"/>
    </location>
</feature>
<feature type="binding site" evidence="2">
    <location>
        <position position="51"/>
    </location>
    <ligand>
        <name>(indol-3-yl)acetate</name>
        <dbReference type="ChEBI" id="CHEBI:30854"/>
    </ligand>
</feature>
<feature type="binding site" evidence="2">
    <location>
        <position position="112"/>
    </location>
    <ligand>
        <name>(indol-3-yl)acetate</name>
        <dbReference type="ChEBI" id="CHEBI:30854"/>
    </ligand>
</feature>
<feature type="binding site" evidence="2">
    <location>
        <position position="114"/>
    </location>
    <ligand>
        <name>(indol-3-yl)acetate</name>
        <dbReference type="ChEBI" id="CHEBI:30854"/>
    </ligand>
</feature>
<feature type="binding site" evidence="2">
    <location>
        <position position="145"/>
    </location>
    <ligand>
        <name>(indol-3-yl)acetate</name>
        <dbReference type="ChEBI" id="CHEBI:30854"/>
    </ligand>
</feature>
<feature type="binding site" evidence="2">
    <location>
        <position position="552"/>
    </location>
    <ligand>
        <name>(indol-3-yl)acetate</name>
        <dbReference type="ChEBI" id="CHEBI:30854"/>
    </ligand>
</feature>
<feature type="binding site" evidence="2">
    <location>
        <position position="553"/>
    </location>
    <ligand>
        <name>(indol-3-yl)acetate</name>
        <dbReference type="ChEBI" id="CHEBI:30854"/>
    </ligand>
</feature>
<gene>
    <name evidence="7" type="primary">PIN1C</name>
    <name evidence="11" type="ordered locus">Os06g0232300</name>
    <name evidence="9" type="ordered locus">LOC_Os06g12610</name>
    <name evidence="10" type="ORF">P0479H10.14</name>
</gene>
<name>PIN1C_ORYSJ</name>
<sequence length="592" mass="64323">MITGADFYHVMTAMVPLYVAMILAYGSVKWWRIFTPDQCSGINRFVALFAVPLLSFHFISTNNPYTMNLRFIAADTLQKLIVLALLTLWSHLSRRGSLEWTITLFSLSTLPNTLVMGIPLLKGMYGEFSGSLMVQIVVLQCIIWYTLMLFMFEYRGARILITEQFPDTAGAIASIVVDADVVSLDGRRDMIETEAEVKEDGKIHVTVRRSNASRSDVYSRRSMGFSSTTPRPSNLTNAEIYSLQSSRNPTPRGSSFNHTDFYSMVGRSSNFAAGDAFGVRTGATPRPSNYEEDAAAPNKAGSKYGQYPAPNPAMAAPPKPKKAANGQAKGEDGKDLHMFVWSSSASPVSDVFGNGAEYNDAAAVKEVRMAVASPRKADGVERDDFSFGNRGVAERDAEAGDEKSVAAAVSGEHGKPGLTPAPTAMPPTSVMTRLILIMVWRKLIRNPNTYSSLIGLIWSLVCFRWNFEMPAIILKSISILSDAGLGMAMFSLGLFMALQPRIIACGNKVATFAMAVRFLTGPAVMAAASIAVGLRGTLLHVAIVQAALPQGIVPFVFAKEYSVHPDILSTAVIFGMLIALPITLVYYILLGL</sequence>
<proteinExistence type="evidence at transcript level"/>
<keyword id="KW-0927">Auxin signaling pathway</keyword>
<keyword id="KW-0472">Membrane</keyword>
<keyword id="KW-1185">Reference proteome</keyword>
<keyword id="KW-0812">Transmembrane</keyword>
<keyword id="KW-1133">Transmembrane helix</keyword>
<keyword id="KW-0813">Transport</keyword>
<comment type="function">
    <text evidence="9">May act as a component of the auxin efflux carrier.</text>
</comment>
<comment type="subunit">
    <text evidence="1">Homodimer.</text>
</comment>
<comment type="subcellular location">
    <subcellularLocation>
        <location evidence="3">Membrane</location>
        <topology evidence="3">Multi-pass membrane protein</topology>
    </subcellularLocation>
</comment>
<comment type="tissue specificity">
    <text evidence="5 6">Expressed at low levels in roots and leaves (Ref.5). Expressed in roots, stem bases, stems, leaves and young panicles (PubMed:19825657).</text>
</comment>
<comment type="similarity">
    <text evidence="9">Belongs to the auxin efflux carrier (TC 2.A.69.1) family.</text>
</comment>
<accession>Q67UL3</accession>
<accession>Q0DDD2</accession>
<dbReference type="EMBL" id="AP005522">
    <property type="protein sequence ID" value="BAD38156.1"/>
    <property type="molecule type" value="Genomic_DNA"/>
</dbReference>
<dbReference type="EMBL" id="AP008212">
    <property type="protein sequence ID" value="BAF19141.1"/>
    <property type="molecule type" value="Genomic_DNA"/>
</dbReference>
<dbReference type="EMBL" id="AP014962">
    <property type="protein sequence ID" value="BAS96925.1"/>
    <property type="molecule type" value="Genomic_DNA"/>
</dbReference>
<dbReference type="EMBL" id="AK103208">
    <property type="protein sequence ID" value="BAG95954.1"/>
    <property type="molecule type" value="mRNA"/>
</dbReference>
<dbReference type="EMBL" id="BR000829">
    <property type="protein sequence ID" value="FAA00678.1"/>
    <property type="molecule type" value="Genomic_DNA"/>
</dbReference>
<dbReference type="RefSeq" id="XP_015641301.1">
    <property type="nucleotide sequence ID" value="XM_015785815.1"/>
</dbReference>
<dbReference type="SMR" id="Q67UL3"/>
<dbReference type="FunCoup" id="Q67UL3">
    <property type="interactions" value="27"/>
</dbReference>
<dbReference type="STRING" id="39947.Q67UL3"/>
<dbReference type="GlyCosmos" id="Q67UL3">
    <property type="glycosylation" value="3 sites, No reported glycans"/>
</dbReference>
<dbReference type="PaxDb" id="39947-Q67UL3"/>
<dbReference type="EnsemblPlants" id="Os06t0232300-01">
    <property type="protein sequence ID" value="Os06t0232300-01"/>
    <property type="gene ID" value="Os06g0232300"/>
</dbReference>
<dbReference type="Gramene" id="Os06t0232300-01">
    <property type="protein sequence ID" value="Os06t0232300-01"/>
    <property type="gene ID" value="Os06g0232300"/>
</dbReference>
<dbReference type="KEGG" id="dosa:Os06g0232300"/>
<dbReference type="eggNOG" id="ENOG502QRM7">
    <property type="taxonomic scope" value="Eukaryota"/>
</dbReference>
<dbReference type="HOGENOM" id="CLU_019285_1_1_1"/>
<dbReference type="InParanoid" id="Q67UL3"/>
<dbReference type="OMA" id="FGSHEYG"/>
<dbReference type="OrthoDB" id="1868374at2759"/>
<dbReference type="PlantReactome" id="R-OSA-5608118">
    <property type="pathway name" value="Auxin signalling"/>
</dbReference>
<dbReference type="PlantReactome" id="R-OSA-8858053">
    <property type="pathway name" value="Polar auxin transport"/>
</dbReference>
<dbReference type="PlantReactome" id="R-OSA-9639861">
    <property type="pathway name" value="Development of root hair"/>
</dbReference>
<dbReference type="Proteomes" id="UP000000763">
    <property type="component" value="Chromosome 6"/>
</dbReference>
<dbReference type="Proteomes" id="UP000059680">
    <property type="component" value="Chromosome 6"/>
</dbReference>
<dbReference type="GO" id="GO:0071944">
    <property type="term" value="C:cell periphery"/>
    <property type="evidence" value="ECO:0000250"/>
    <property type="project" value="UniProtKB"/>
</dbReference>
<dbReference type="GO" id="GO:0005783">
    <property type="term" value="C:endoplasmic reticulum"/>
    <property type="evidence" value="ECO:0000318"/>
    <property type="project" value="GO_Central"/>
</dbReference>
<dbReference type="GO" id="GO:0005886">
    <property type="term" value="C:plasma membrane"/>
    <property type="evidence" value="ECO:0000250"/>
    <property type="project" value="UniProtKB"/>
</dbReference>
<dbReference type="GO" id="GO:0010329">
    <property type="term" value="F:auxin efflux transmembrane transporter activity"/>
    <property type="evidence" value="ECO:0000250"/>
    <property type="project" value="UniProtKB"/>
</dbReference>
<dbReference type="GO" id="GO:0042802">
    <property type="term" value="F:identical protein binding"/>
    <property type="evidence" value="ECO:0000250"/>
    <property type="project" value="UniProtKB"/>
</dbReference>
<dbReference type="GO" id="GO:0042803">
    <property type="term" value="F:protein homodimerization activity"/>
    <property type="evidence" value="ECO:0000250"/>
    <property type="project" value="UniProtKB"/>
</dbReference>
<dbReference type="GO" id="GO:0010315">
    <property type="term" value="P:auxin export across the plasma membrane"/>
    <property type="evidence" value="ECO:0000250"/>
    <property type="project" value="UniProtKB"/>
</dbReference>
<dbReference type="GO" id="GO:0009926">
    <property type="term" value="P:auxin polar transport"/>
    <property type="evidence" value="ECO:0000318"/>
    <property type="project" value="GO_Central"/>
</dbReference>
<dbReference type="GO" id="GO:0009734">
    <property type="term" value="P:auxin-activated signaling pathway"/>
    <property type="evidence" value="ECO:0007669"/>
    <property type="project" value="UniProtKB-KW"/>
</dbReference>
<dbReference type="InterPro" id="IPR014024">
    <property type="entry name" value="Auxin_eff_plant"/>
</dbReference>
<dbReference type="InterPro" id="IPR051107">
    <property type="entry name" value="Auxin_Efflux_Carrier"/>
</dbReference>
<dbReference type="InterPro" id="IPR004776">
    <property type="entry name" value="Mem_transp_PIN-like"/>
</dbReference>
<dbReference type="NCBIfam" id="TIGR00946">
    <property type="entry name" value="2a69"/>
    <property type="match status" value="1"/>
</dbReference>
<dbReference type="PANTHER" id="PTHR31752:SF18">
    <property type="entry name" value="AUXIN EFFLUX CARRIER COMPONENT 1"/>
    <property type="match status" value="1"/>
</dbReference>
<dbReference type="PANTHER" id="PTHR31752">
    <property type="entry name" value="AUXIN EFFLUX CARRIER COMPONENT 1B-RELATED"/>
    <property type="match status" value="1"/>
</dbReference>
<dbReference type="Pfam" id="PF03547">
    <property type="entry name" value="Mem_trans"/>
    <property type="match status" value="1"/>
</dbReference>
<evidence type="ECO:0000250" key="1">
    <source>
        <dbReference type="UniProtKB" id="Q9C6B8"/>
    </source>
</evidence>
<evidence type="ECO:0000250" key="2">
    <source>
        <dbReference type="UniProtKB" id="Q9LFP6"/>
    </source>
</evidence>
<evidence type="ECO:0000255" key="3"/>
<evidence type="ECO:0000256" key="4">
    <source>
        <dbReference type="SAM" id="MobiDB-lite"/>
    </source>
</evidence>
<evidence type="ECO:0000269" key="5">
    <source>
    </source>
</evidence>
<evidence type="ECO:0000269" key="6">
    <source ref="5"/>
</evidence>
<evidence type="ECO:0000303" key="7">
    <source>
    </source>
</evidence>
<evidence type="ECO:0000303" key="8">
    <source>
    </source>
</evidence>
<evidence type="ECO:0000305" key="9"/>
<evidence type="ECO:0000312" key="10">
    <source>
        <dbReference type="EMBL" id="BAD38156.1"/>
    </source>
</evidence>
<evidence type="ECO:0000312" key="11">
    <source>
        <dbReference type="EMBL" id="BAS96925.1"/>
    </source>
</evidence>
<protein>
    <recommendedName>
        <fullName evidence="9">Probable auxin efflux carrier component 1c</fullName>
        <shortName evidence="7">OsPIN1c</shortName>
    </recommendedName>
    <alternativeName>
        <fullName evidence="8">OsPIN1a</fullName>
    </alternativeName>
</protein>